<accession>B9K7N7</accession>
<dbReference type="EMBL" id="CP000916">
    <property type="protein sequence ID" value="ACM22970.1"/>
    <property type="molecule type" value="Genomic_DNA"/>
</dbReference>
<dbReference type="RefSeq" id="WP_015919287.1">
    <property type="nucleotide sequence ID" value="NC_011978.1"/>
</dbReference>
<dbReference type="SMR" id="B9K7N7"/>
<dbReference type="STRING" id="309803.CTN_0794"/>
<dbReference type="KEGG" id="tna:CTN_0794"/>
<dbReference type="eggNOG" id="COG0468">
    <property type="taxonomic scope" value="Bacteria"/>
</dbReference>
<dbReference type="HOGENOM" id="CLU_040469_1_2_0"/>
<dbReference type="Proteomes" id="UP000000445">
    <property type="component" value="Chromosome"/>
</dbReference>
<dbReference type="GO" id="GO:0005829">
    <property type="term" value="C:cytosol"/>
    <property type="evidence" value="ECO:0007669"/>
    <property type="project" value="TreeGrafter"/>
</dbReference>
<dbReference type="GO" id="GO:0005524">
    <property type="term" value="F:ATP binding"/>
    <property type="evidence" value="ECO:0007669"/>
    <property type="project" value="UniProtKB-UniRule"/>
</dbReference>
<dbReference type="GO" id="GO:0016887">
    <property type="term" value="F:ATP hydrolysis activity"/>
    <property type="evidence" value="ECO:0007669"/>
    <property type="project" value="InterPro"/>
</dbReference>
<dbReference type="GO" id="GO:0140664">
    <property type="term" value="F:ATP-dependent DNA damage sensor activity"/>
    <property type="evidence" value="ECO:0007669"/>
    <property type="project" value="InterPro"/>
</dbReference>
<dbReference type="GO" id="GO:0003684">
    <property type="term" value="F:damaged DNA binding"/>
    <property type="evidence" value="ECO:0007669"/>
    <property type="project" value="UniProtKB-UniRule"/>
</dbReference>
<dbReference type="GO" id="GO:0003697">
    <property type="term" value="F:single-stranded DNA binding"/>
    <property type="evidence" value="ECO:0007669"/>
    <property type="project" value="UniProtKB-UniRule"/>
</dbReference>
<dbReference type="GO" id="GO:0006310">
    <property type="term" value="P:DNA recombination"/>
    <property type="evidence" value="ECO:0007669"/>
    <property type="project" value="UniProtKB-UniRule"/>
</dbReference>
<dbReference type="GO" id="GO:0006281">
    <property type="term" value="P:DNA repair"/>
    <property type="evidence" value="ECO:0007669"/>
    <property type="project" value="UniProtKB-UniRule"/>
</dbReference>
<dbReference type="GO" id="GO:0009432">
    <property type="term" value="P:SOS response"/>
    <property type="evidence" value="ECO:0007669"/>
    <property type="project" value="UniProtKB-UniRule"/>
</dbReference>
<dbReference type="CDD" id="cd00983">
    <property type="entry name" value="RecA"/>
    <property type="match status" value="1"/>
</dbReference>
<dbReference type="FunFam" id="3.40.50.300:FF:000087">
    <property type="entry name" value="Recombinase RecA"/>
    <property type="match status" value="1"/>
</dbReference>
<dbReference type="Gene3D" id="3.40.50.300">
    <property type="entry name" value="P-loop containing nucleotide triphosphate hydrolases"/>
    <property type="match status" value="1"/>
</dbReference>
<dbReference type="HAMAP" id="MF_00268">
    <property type="entry name" value="RecA"/>
    <property type="match status" value="1"/>
</dbReference>
<dbReference type="InterPro" id="IPR003593">
    <property type="entry name" value="AAA+_ATPase"/>
</dbReference>
<dbReference type="InterPro" id="IPR013765">
    <property type="entry name" value="DNA_recomb/repair_RecA"/>
</dbReference>
<dbReference type="InterPro" id="IPR020584">
    <property type="entry name" value="DNA_recomb/repair_RecA_CS"/>
</dbReference>
<dbReference type="InterPro" id="IPR027417">
    <property type="entry name" value="P-loop_NTPase"/>
</dbReference>
<dbReference type="InterPro" id="IPR049261">
    <property type="entry name" value="RecA-like_C"/>
</dbReference>
<dbReference type="InterPro" id="IPR049428">
    <property type="entry name" value="RecA-like_N"/>
</dbReference>
<dbReference type="InterPro" id="IPR020588">
    <property type="entry name" value="RecA_ATP-bd"/>
</dbReference>
<dbReference type="InterPro" id="IPR023400">
    <property type="entry name" value="RecA_C_sf"/>
</dbReference>
<dbReference type="InterPro" id="IPR020587">
    <property type="entry name" value="RecA_monomer-monomer_interface"/>
</dbReference>
<dbReference type="NCBIfam" id="TIGR02012">
    <property type="entry name" value="tigrfam_recA"/>
    <property type="match status" value="1"/>
</dbReference>
<dbReference type="PANTHER" id="PTHR45900:SF1">
    <property type="entry name" value="MITOCHONDRIAL DNA REPAIR PROTEIN RECA HOMOLOG-RELATED"/>
    <property type="match status" value="1"/>
</dbReference>
<dbReference type="PANTHER" id="PTHR45900">
    <property type="entry name" value="RECA"/>
    <property type="match status" value="1"/>
</dbReference>
<dbReference type="Pfam" id="PF00154">
    <property type="entry name" value="RecA"/>
    <property type="match status" value="1"/>
</dbReference>
<dbReference type="Pfam" id="PF21096">
    <property type="entry name" value="RecA_C"/>
    <property type="match status" value="1"/>
</dbReference>
<dbReference type="PRINTS" id="PR00142">
    <property type="entry name" value="RECA"/>
</dbReference>
<dbReference type="SMART" id="SM00382">
    <property type="entry name" value="AAA"/>
    <property type="match status" value="1"/>
</dbReference>
<dbReference type="SUPFAM" id="SSF52540">
    <property type="entry name" value="P-loop containing nucleoside triphosphate hydrolases"/>
    <property type="match status" value="1"/>
</dbReference>
<dbReference type="SUPFAM" id="SSF54752">
    <property type="entry name" value="RecA protein, C-terminal domain"/>
    <property type="match status" value="1"/>
</dbReference>
<dbReference type="PROSITE" id="PS00321">
    <property type="entry name" value="RECA_1"/>
    <property type="match status" value="1"/>
</dbReference>
<dbReference type="PROSITE" id="PS50162">
    <property type="entry name" value="RECA_2"/>
    <property type="match status" value="1"/>
</dbReference>
<dbReference type="PROSITE" id="PS50163">
    <property type="entry name" value="RECA_3"/>
    <property type="match status" value="1"/>
</dbReference>
<comment type="function">
    <text evidence="1">Can catalyze the hydrolysis of ATP in the presence of single-stranded DNA, the ATP-dependent uptake of single-stranded DNA by duplex DNA, and the ATP-dependent hybridization of homologous single-stranded DNAs. It interacts with LexA causing its activation and leading to its autocatalytic cleavage.</text>
</comment>
<comment type="subcellular location">
    <subcellularLocation>
        <location evidence="1">Cytoplasm</location>
    </subcellularLocation>
</comment>
<comment type="similarity">
    <text evidence="1">Belongs to the RecA family.</text>
</comment>
<evidence type="ECO:0000255" key="1">
    <source>
        <dbReference type="HAMAP-Rule" id="MF_00268"/>
    </source>
</evidence>
<organism>
    <name type="scientific">Thermotoga neapolitana (strain ATCC 49049 / DSM 4359 / NBRC 107923 / NS-E)</name>
    <dbReference type="NCBI Taxonomy" id="309803"/>
    <lineage>
        <taxon>Bacteria</taxon>
        <taxon>Thermotogati</taxon>
        <taxon>Thermotogota</taxon>
        <taxon>Thermotogae</taxon>
        <taxon>Thermotogales</taxon>
        <taxon>Thermotogaceae</taxon>
        <taxon>Thermotoga</taxon>
    </lineage>
</organism>
<reference key="1">
    <citation type="submission" date="2007-11" db="EMBL/GenBank/DDBJ databases">
        <title>The genome sequence of the hyperthermophilic bacterium Thermotoga neapolitana.</title>
        <authorList>
            <person name="Lim S.K."/>
            <person name="Kim J.S."/>
            <person name="Cha S.H."/>
            <person name="Park B.C."/>
            <person name="Lee D.S."/>
            <person name="Tae H.S."/>
            <person name="Kim S.-J."/>
            <person name="Kim J.J."/>
            <person name="Park K.J."/>
            <person name="Lee S.Y."/>
        </authorList>
    </citation>
    <scope>NUCLEOTIDE SEQUENCE [LARGE SCALE GENOMIC DNA]</scope>
    <source>
        <strain>ATCC 49049 / DSM 4359 / NBRC 107923 / NS-E</strain>
    </source>
</reference>
<protein>
    <recommendedName>
        <fullName evidence="1">Protein RecA</fullName>
    </recommendedName>
    <alternativeName>
        <fullName evidence="1">Recombinase A</fullName>
    </alternativeName>
</protein>
<proteinExistence type="inferred from homology"/>
<sequence>MAEEKQKKSVLEKALKRIEENFGKGSIMILGDETQVQPVEVIPTGSIAIDIATGVGGYPRGRIVEIFGPESSGKTTLALHAIAEAQKMGGVAAFIDAEHALDPVYAKNLGVDLKSLLISQPDHGEQALEIVDELVRSGVVDLIVVDSVAALVPRAEIEGAMGDMQVGLQARLMSQALRKIAGSVNKSKAVVIFTNQIRMKIGVMFGSPETTTGGLALKFYATMRLEVRRGEALKEGKDVIGNVVNVKIVKNKVAPPFKTAQTYIIYGKGIDREYELFHIGVDEGVITRKGSWYYYTTLKGEEVSLGQGGSNVVQFLKENPQIAEEIERRIKEKYGLLRQTEKEPEKADKSS</sequence>
<feature type="chain" id="PRO_1000193336" description="Protein RecA">
    <location>
        <begin position="1"/>
        <end position="351"/>
    </location>
</feature>
<feature type="binding site" evidence="1">
    <location>
        <begin position="68"/>
        <end position="75"/>
    </location>
    <ligand>
        <name>ATP</name>
        <dbReference type="ChEBI" id="CHEBI:30616"/>
    </ligand>
</feature>
<name>RECA_THENN</name>
<gene>
    <name evidence="1" type="primary">recA</name>
    <name type="ordered locus">CTN_0794</name>
</gene>
<keyword id="KW-0067">ATP-binding</keyword>
<keyword id="KW-0963">Cytoplasm</keyword>
<keyword id="KW-0227">DNA damage</keyword>
<keyword id="KW-0233">DNA recombination</keyword>
<keyword id="KW-0234">DNA repair</keyword>
<keyword id="KW-0238">DNA-binding</keyword>
<keyword id="KW-0547">Nucleotide-binding</keyword>
<keyword id="KW-0742">SOS response</keyword>